<evidence type="ECO:0000255" key="1">
    <source>
        <dbReference type="HAMAP-Rule" id="MF_00183"/>
    </source>
</evidence>
<accession>A5D2U3</accession>
<reference key="1">
    <citation type="journal article" date="2008" name="Genome Res.">
        <title>The genome of Pelotomaculum thermopropionicum reveals niche-associated evolution in anaerobic microbiota.</title>
        <authorList>
            <person name="Kosaka T."/>
            <person name="Kato S."/>
            <person name="Shimoyama T."/>
            <person name="Ishii S."/>
            <person name="Abe T."/>
            <person name="Watanabe K."/>
        </authorList>
    </citation>
    <scope>NUCLEOTIDE SEQUENCE [LARGE SCALE GENOMIC DNA]</scope>
    <source>
        <strain>DSM 13744 / JCM 10971 / SI</strain>
    </source>
</reference>
<sequence length="387" mass="42114">MKNIVLIGSTGSIGRQTLEVIGSLPDRFKVVGLGSGKNWRLMAEQIRVFRPSAVAMAGEREIMNLKELLAGSYCPELGWGRTGMESLASMPEADLVVVAVTGFAGIYPTIAAIQAGKDVALANKETLVAAGHLVMKMAERHRAAILPVDSEHSAVWQCLCGRNSGEVEKIILTASGGPFREMCLEKLEKVTVDMALKHPNWNMGSKITIDSATLMNKGLEVIEAKWLFGLNYSQIEVVIHPQSIVHSAVEFLDGSVIAQMGLPDMRLPIQYALTYPERLPGSFPKLKLASLQGLTFEEPDTRRFPCLSLAFEAGLAGGTMPAVLNAANEVAVEFFLKGLLPFLGIPSVVRSVMEKHEMASDPGLEEIIEADRWARNMGVKVIRDLFN</sequence>
<proteinExistence type="inferred from homology"/>
<protein>
    <recommendedName>
        <fullName evidence="1">1-deoxy-D-xylulose 5-phosphate reductoisomerase</fullName>
        <shortName evidence="1">DXP reductoisomerase</shortName>
        <ecNumber evidence="1">1.1.1.267</ecNumber>
    </recommendedName>
    <alternativeName>
        <fullName evidence="1">1-deoxyxylulose-5-phosphate reductoisomerase</fullName>
    </alternativeName>
    <alternativeName>
        <fullName evidence="1">2-C-methyl-D-erythritol 4-phosphate synthase</fullName>
    </alternativeName>
</protein>
<name>DXR_PELTS</name>
<keyword id="KW-0414">Isoprene biosynthesis</keyword>
<keyword id="KW-0464">Manganese</keyword>
<keyword id="KW-0479">Metal-binding</keyword>
<keyword id="KW-0521">NADP</keyword>
<keyword id="KW-0560">Oxidoreductase</keyword>
<keyword id="KW-1185">Reference proteome</keyword>
<comment type="function">
    <text evidence="1">Catalyzes the NADPH-dependent rearrangement and reduction of 1-deoxy-D-xylulose-5-phosphate (DXP) to 2-C-methyl-D-erythritol 4-phosphate (MEP).</text>
</comment>
<comment type="catalytic activity">
    <reaction evidence="1">
        <text>2-C-methyl-D-erythritol 4-phosphate + NADP(+) = 1-deoxy-D-xylulose 5-phosphate + NADPH + H(+)</text>
        <dbReference type="Rhea" id="RHEA:13717"/>
        <dbReference type="ChEBI" id="CHEBI:15378"/>
        <dbReference type="ChEBI" id="CHEBI:57783"/>
        <dbReference type="ChEBI" id="CHEBI:57792"/>
        <dbReference type="ChEBI" id="CHEBI:58262"/>
        <dbReference type="ChEBI" id="CHEBI:58349"/>
        <dbReference type="EC" id="1.1.1.267"/>
    </reaction>
    <physiologicalReaction direction="right-to-left" evidence="1">
        <dbReference type="Rhea" id="RHEA:13719"/>
    </physiologicalReaction>
</comment>
<comment type="cofactor">
    <cofactor evidence="1">
        <name>Mg(2+)</name>
        <dbReference type="ChEBI" id="CHEBI:18420"/>
    </cofactor>
    <cofactor evidence="1">
        <name>Mn(2+)</name>
        <dbReference type="ChEBI" id="CHEBI:29035"/>
    </cofactor>
</comment>
<comment type="pathway">
    <text evidence="1">Isoprenoid biosynthesis; isopentenyl diphosphate biosynthesis via DXP pathway; isopentenyl diphosphate from 1-deoxy-D-xylulose 5-phosphate: step 1/6.</text>
</comment>
<comment type="similarity">
    <text evidence="1">Belongs to the DXR family.</text>
</comment>
<dbReference type="EC" id="1.1.1.267" evidence="1"/>
<dbReference type="EMBL" id="AP009389">
    <property type="protein sequence ID" value="BAF59441.1"/>
    <property type="molecule type" value="Genomic_DNA"/>
</dbReference>
<dbReference type="SMR" id="A5D2U3"/>
<dbReference type="STRING" id="370438.PTH_1260"/>
<dbReference type="KEGG" id="pth:PTH_1260"/>
<dbReference type="eggNOG" id="COG0743">
    <property type="taxonomic scope" value="Bacteria"/>
</dbReference>
<dbReference type="HOGENOM" id="CLU_035714_4_0_9"/>
<dbReference type="UniPathway" id="UPA00056">
    <property type="reaction ID" value="UER00092"/>
</dbReference>
<dbReference type="Proteomes" id="UP000006556">
    <property type="component" value="Chromosome"/>
</dbReference>
<dbReference type="GO" id="GO:0030604">
    <property type="term" value="F:1-deoxy-D-xylulose-5-phosphate reductoisomerase activity"/>
    <property type="evidence" value="ECO:0007669"/>
    <property type="project" value="UniProtKB-UniRule"/>
</dbReference>
<dbReference type="GO" id="GO:0030145">
    <property type="term" value="F:manganese ion binding"/>
    <property type="evidence" value="ECO:0007669"/>
    <property type="project" value="TreeGrafter"/>
</dbReference>
<dbReference type="GO" id="GO:0070402">
    <property type="term" value="F:NADPH binding"/>
    <property type="evidence" value="ECO:0007669"/>
    <property type="project" value="InterPro"/>
</dbReference>
<dbReference type="GO" id="GO:0051484">
    <property type="term" value="P:isopentenyl diphosphate biosynthetic process, methylerythritol 4-phosphate pathway involved in terpenoid biosynthetic process"/>
    <property type="evidence" value="ECO:0007669"/>
    <property type="project" value="TreeGrafter"/>
</dbReference>
<dbReference type="FunFam" id="3.40.50.720:FF:000045">
    <property type="entry name" value="1-deoxy-D-xylulose 5-phosphate reductoisomerase"/>
    <property type="match status" value="1"/>
</dbReference>
<dbReference type="Gene3D" id="1.10.1740.10">
    <property type="match status" value="1"/>
</dbReference>
<dbReference type="Gene3D" id="3.40.50.720">
    <property type="entry name" value="NAD(P)-binding Rossmann-like Domain"/>
    <property type="match status" value="1"/>
</dbReference>
<dbReference type="HAMAP" id="MF_00183">
    <property type="entry name" value="DXP_reductoisom"/>
    <property type="match status" value="1"/>
</dbReference>
<dbReference type="InterPro" id="IPR003821">
    <property type="entry name" value="DXP_reductoisomerase"/>
</dbReference>
<dbReference type="InterPro" id="IPR013644">
    <property type="entry name" value="DXP_reductoisomerase_C"/>
</dbReference>
<dbReference type="InterPro" id="IPR013512">
    <property type="entry name" value="DXP_reductoisomerase_N"/>
</dbReference>
<dbReference type="InterPro" id="IPR026877">
    <property type="entry name" value="DXPR_C"/>
</dbReference>
<dbReference type="InterPro" id="IPR036169">
    <property type="entry name" value="DXPR_C_sf"/>
</dbReference>
<dbReference type="InterPro" id="IPR036291">
    <property type="entry name" value="NAD(P)-bd_dom_sf"/>
</dbReference>
<dbReference type="NCBIfam" id="TIGR00243">
    <property type="entry name" value="Dxr"/>
    <property type="match status" value="1"/>
</dbReference>
<dbReference type="NCBIfam" id="NF009114">
    <property type="entry name" value="PRK12464.1"/>
    <property type="match status" value="1"/>
</dbReference>
<dbReference type="PANTHER" id="PTHR30525">
    <property type="entry name" value="1-DEOXY-D-XYLULOSE 5-PHOSPHATE REDUCTOISOMERASE"/>
    <property type="match status" value="1"/>
</dbReference>
<dbReference type="PANTHER" id="PTHR30525:SF0">
    <property type="entry name" value="1-DEOXY-D-XYLULOSE 5-PHOSPHATE REDUCTOISOMERASE, CHLOROPLASTIC"/>
    <property type="match status" value="1"/>
</dbReference>
<dbReference type="Pfam" id="PF08436">
    <property type="entry name" value="DXP_redisom_C"/>
    <property type="match status" value="1"/>
</dbReference>
<dbReference type="Pfam" id="PF02670">
    <property type="entry name" value="DXP_reductoisom"/>
    <property type="match status" value="1"/>
</dbReference>
<dbReference type="Pfam" id="PF13288">
    <property type="entry name" value="DXPR_C"/>
    <property type="match status" value="1"/>
</dbReference>
<dbReference type="PIRSF" id="PIRSF006205">
    <property type="entry name" value="Dxp_reductismrs"/>
    <property type="match status" value="1"/>
</dbReference>
<dbReference type="SUPFAM" id="SSF69055">
    <property type="entry name" value="1-deoxy-D-xylulose-5-phosphate reductoisomerase, C-terminal domain"/>
    <property type="match status" value="1"/>
</dbReference>
<dbReference type="SUPFAM" id="SSF55347">
    <property type="entry name" value="Glyceraldehyde-3-phosphate dehydrogenase-like, C-terminal domain"/>
    <property type="match status" value="1"/>
</dbReference>
<dbReference type="SUPFAM" id="SSF51735">
    <property type="entry name" value="NAD(P)-binding Rossmann-fold domains"/>
    <property type="match status" value="1"/>
</dbReference>
<feature type="chain" id="PRO_1000077337" description="1-deoxy-D-xylulose 5-phosphate reductoisomerase">
    <location>
        <begin position="1"/>
        <end position="387"/>
    </location>
</feature>
<feature type="binding site" evidence="1">
    <location>
        <position position="10"/>
    </location>
    <ligand>
        <name>NADPH</name>
        <dbReference type="ChEBI" id="CHEBI:57783"/>
    </ligand>
</feature>
<feature type="binding site" evidence="1">
    <location>
        <position position="11"/>
    </location>
    <ligand>
        <name>NADPH</name>
        <dbReference type="ChEBI" id="CHEBI:57783"/>
    </ligand>
</feature>
<feature type="binding site" evidence="1">
    <location>
        <position position="12"/>
    </location>
    <ligand>
        <name>NADPH</name>
        <dbReference type="ChEBI" id="CHEBI:57783"/>
    </ligand>
</feature>
<feature type="binding site" evidence="1">
    <location>
        <position position="13"/>
    </location>
    <ligand>
        <name>NADPH</name>
        <dbReference type="ChEBI" id="CHEBI:57783"/>
    </ligand>
</feature>
<feature type="binding site" evidence="1">
    <location>
        <position position="36"/>
    </location>
    <ligand>
        <name>NADPH</name>
        <dbReference type="ChEBI" id="CHEBI:57783"/>
    </ligand>
</feature>
<feature type="binding site" evidence="1">
    <location>
        <position position="37"/>
    </location>
    <ligand>
        <name>NADPH</name>
        <dbReference type="ChEBI" id="CHEBI:57783"/>
    </ligand>
</feature>
<feature type="binding site" evidence="1">
    <location>
        <position position="38"/>
    </location>
    <ligand>
        <name>NADPH</name>
        <dbReference type="ChEBI" id="CHEBI:57783"/>
    </ligand>
</feature>
<feature type="binding site" evidence="1">
    <location>
        <position position="123"/>
    </location>
    <ligand>
        <name>NADPH</name>
        <dbReference type="ChEBI" id="CHEBI:57783"/>
    </ligand>
</feature>
<feature type="binding site" evidence="1">
    <location>
        <position position="124"/>
    </location>
    <ligand>
        <name>1-deoxy-D-xylulose 5-phosphate</name>
        <dbReference type="ChEBI" id="CHEBI:57792"/>
    </ligand>
</feature>
<feature type="binding site" evidence="1">
    <location>
        <position position="125"/>
    </location>
    <ligand>
        <name>NADPH</name>
        <dbReference type="ChEBI" id="CHEBI:57783"/>
    </ligand>
</feature>
<feature type="binding site" evidence="1">
    <location>
        <position position="149"/>
    </location>
    <ligand>
        <name>Mn(2+)</name>
        <dbReference type="ChEBI" id="CHEBI:29035"/>
    </ligand>
</feature>
<feature type="binding site" evidence="1">
    <location>
        <position position="150"/>
    </location>
    <ligand>
        <name>1-deoxy-D-xylulose 5-phosphate</name>
        <dbReference type="ChEBI" id="CHEBI:57792"/>
    </ligand>
</feature>
<feature type="binding site" evidence="1">
    <location>
        <position position="151"/>
    </location>
    <ligand>
        <name>1-deoxy-D-xylulose 5-phosphate</name>
        <dbReference type="ChEBI" id="CHEBI:57792"/>
    </ligand>
</feature>
<feature type="binding site" evidence="1">
    <location>
        <position position="151"/>
    </location>
    <ligand>
        <name>Mn(2+)</name>
        <dbReference type="ChEBI" id="CHEBI:29035"/>
    </ligand>
</feature>
<feature type="binding site" evidence="1">
    <location>
        <position position="175"/>
    </location>
    <ligand>
        <name>1-deoxy-D-xylulose 5-phosphate</name>
        <dbReference type="ChEBI" id="CHEBI:57792"/>
    </ligand>
</feature>
<feature type="binding site" evidence="1">
    <location>
        <position position="198"/>
    </location>
    <ligand>
        <name>1-deoxy-D-xylulose 5-phosphate</name>
        <dbReference type="ChEBI" id="CHEBI:57792"/>
    </ligand>
</feature>
<feature type="binding site" evidence="1">
    <location>
        <position position="204"/>
    </location>
    <ligand>
        <name>NADPH</name>
        <dbReference type="ChEBI" id="CHEBI:57783"/>
    </ligand>
</feature>
<feature type="binding site" evidence="1">
    <location>
        <position position="211"/>
    </location>
    <ligand>
        <name>1-deoxy-D-xylulose 5-phosphate</name>
        <dbReference type="ChEBI" id="CHEBI:57792"/>
    </ligand>
</feature>
<feature type="binding site" evidence="1">
    <location>
        <position position="216"/>
    </location>
    <ligand>
        <name>1-deoxy-D-xylulose 5-phosphate</name>
        <dbReference type="ChEBI" id="CHEBI:57792"/>
    </ligand>
</feature>
<feature type="binding site" evidence="1">
    <location>
        <position position="217"/>
    </location>
    <ligand>
        <name>1-deoxy-D-xylulose 5-phosphate</name>
        <dbReference type="ChEBI" id="CHEBI:57792"/>
    </ligand>
</feature>
<feature type="binding site" evidence="1">
    <location>
        <position position="220"/>
    </location>
    <ligand>
        <name>1-deoxy-D-xylulose 5-phosphate</name>
        <dbReference type="ChEBI" id="CHEBI:57792"/>
    </ligand>
</feature>
<feature type="binding site" evidence="1">
    <location>
        <position position="220"/>
    </location>
    <ligand>
        <name>Mn(2+)</name>
        <dbReference type="ChEBI" id="CHEBI:29035"/>
    </ligand>
</feature>
<gene>
    <name evidence="1" type="primary">dxr</name>
    <name type="ordered locus">PTH_1260</name>
</gene>
<organism>
    <name type="scientific">Pelotomaculum thermopropionicum (strain DSM 13744 / JCM 10971 / SI)</name>
    <dbReference type="NCBI Taxonomy" id="370438"/>
    <lineage>
        <taxon>Bacteria</taxon>
        <taxon>Bacillati</taxon>
        <taxon>Bacillota</taxon>
        <taxon>Clostridia</taxon>
        <taxon>Eubacteriales</taxon>
        <taxon>Desulfotomaculaceae</taxon>
        <taxon>Pelotomaculum</taxon>
    </lineage>
</organism>